<name>CSTR2_ORYSJ</name>
<dbReference type="EMBL" id="AP003845">
    <property type="protein sequence ID" value="BAC83154.1"/>
    <property type="molecule type" value="Genomic_DNA"/>
</dbReference>
<dbReference type="EMBL" id="AP008213">
    <property type="protein sequence ID" value="BAF21983.1"/>
    <property type="molecule type" value="Genomic_DNA"/>
</dbReference>
<dbReference type="EMBL" id="AP014963">
    <property type="protein sequence ID" value="BAT02263.1"/>
    <property type="molecule type" value="Genomic_DNA"/>
</dbReference>
<dbReference type="EMBL" id="CM000144">
    <property type="protein sequence ID" value="EEE67452.1"/>
    <property type="molecule type" value="Genomic_DNA"/>
</dbReference>
<dbReference type="EMBL" id="AK070473">
    <property type="protein sequence ID" value="BAG91974.1"/>
    <property type="molecule type" value="mRNA"/>
</dbReference>
<dbReference type="RefSeq" id="XP_015645198.1">
    <property type="nucleotide sequence ID" value="XM_015789712.1"/>
</dbReference>
<dbReference type="SMR" id="Q6ZL17"/>
<dbReference type="FunCoup" id="Q6ZL17">
    <property type="interactions" value="1400"/>
</dbReference>
<dbReference type="STRING" id="39947.Q6ZL17"/>
<dbReference type="PaxDb" id="39947-Q6ZL17"/>
<dbReference type="EnsemblPlants" id="Os07t0573700-01">
    <property type="protein sequence ID" value="Os07t0573700-01"/>
    <property type="gene ID" value="Os07g0573700"/>
</dbReference>
<dbReference type="Gramene" id="Os07t0573700-01">
    <property type="protein sequence ID" value="Os07t0573700-01"/>
    <property type="gene ID" value="Os07g0573700"/>
</dbReference>
<dbReference type="KEGG" id="dosa:Os07g0573700"/>
<dbReference type="eggNOG" id="KOG2234">
    <property type="taxonomic scope" value="Eukaryota"/>
</dbReference>
<dbReference type="HOGENOM" id="CLU_024645_5_0_1"/>
<dbReference type="InParanoid" id="Q6ZL17"/>
<dbReference type="OMA" id="KCYVIAS"/>
<dbReference type="OrthoDB" id="408493at2759"/>
<dbReference type="Proteomes" id="UP000000763">
    <property type="component" value="Chromosome 7"/>
</dbReference>
<dbReference type="Proteomes" id="UP000007752">
    <property type="component" value="Chromosome 7"/>
</dbReference>
<dbReference type="Proteomes" id="UP000059680">
    <property type="component" value="Chromosome 7"/>
</dbReference>
<dbReference type="GO" id="GO:0000139">
    <property type="term" value="C:Golgi membrane"/>
    <property type="evidence" value="ECO:0000318"/>
    <property type="project" value="GO_Central"/>
</dbReference>
<dbReference type="GO" id="GO:0015165">
    <property type="term" value="F:pyrimidine nucleotide-sugar transmembrane transporter activity"/>
    <property type="evidence" value="ECO:0007669"/>
    <property type="project" value="InterPro"/>
</dbReference>
<dbReference type="GO" id="GO:0022857">
    <property type="term" value="F:transmembrane transporter activity"/>
    <property type="evidence" value="ECO:0000318"/>
    <property type="project" value="GO_Central"/>
</dbReference>
<dbReference type="GO" id="GO:0055085">
    <property type="term" value="P:transmembrane transport"/>
    <property type="evidence" value="ECO:0000318"/>
    <property type="project" value="GO_Central"/>
</dbReference>
<dbReference type="InterPro" id="IPR007271">
    <property type="entry name" value="Nuc_sug_transpt"/>
</dbReference>
<dbReference type="NCBIfam" id="TIGR00803">
    <property type="entry name" value="nst"/>
    <property type="match status" value="1"/>
</dbReference>
<dbReference type="PANTHER" id="PTHR10231">
    <property type="entry name" value="NUCLEOTIDE-SUGAR TRANSMEMBRANE TRANSPORTER"/>
    <property type="match status" value="1"/>
</dbReference>
<dbReference type="Pfam" id="PF04142">
    <property type="entry name" value="Nuc_sug_transp"/>
    <property type="match status" value="1"/>
</dbReference>
<dbReference type="PIRSF" id="PIRSF005799">
    <property type="entry name" value="UDP-gal_transpt"/>
    <property type="match status" value="1"/>
</dbReference>
<dbReference type="SUPFAM" id="SSF103481">
    <property type="entry name" value="Multidrug resistance efflux transporter EmrE"/>
    <property type="match status" value="1"/>
</dbReference>
<accession>Q6ZL17</accession>
<accession>A0A0P0X852</accession>
<evidence type="ECO:0000250" key="1">
    <source>
        <dbReference type="UniProtKB" id="Q654D9"/>
    </source>
</evidence>
<evidence type="ECO:0000255" key="2"/>
<evidence type="ECO:0000256" key="3">
    <source>
        <dbReference type="SAM" id="MobiDB-lite"/>
    </source>
</evidence>
<evidence type="ECO:0000269" key="4">
    <source>
    </source>
</evidence>
<evidence type="ECO:0000303" key="5">
    <source>
    </source>
</evidence>
<evidence type="ECO:0000305" key="6"/>
<evidence type="ECO:0000312" key="7">
    <source>
        <dbReference type="EMBL" id="BAC83154.1"/>
    </source>
</evidence>
<evidence type="ECO:0000312" key="8">
    <source>
        <dbReference type="EMBL" id="BAF21983.1"/>
    </source>
</evidence>
<evidence type="ECO:0000312" key="9">
    <source>
        <dbReference type="EMBL" id="EEE67452.1"/>
    </source>
</evidence>
<proteinExistence type="evidence at transcript level"/>
<protein>
    <recommendedName>
        <fullName evidence="6">CMP-sialic acid transporter 2</fullName>
        <shortName evidence="6">CMP-SA-Tr 2</shortName>
        <shortName evidence="6">CMP-Sia-Tr 2</shortName>
    </recommendedName>
    <alternativeName>
        <fullName evidence="5">CMP-sialic acid transporter-like protein 2</fullName>
        <shortName evidence="5">OsCSTLP2</shortName>
    </alternativeName>
</protein>
<reference key="1">
    <citation type="journal article" date="2005" name="Nature">
        <title>The map-based sequence of the rice genome.</title>
        <authorList>
            <consortium name="International rice genome sequencing project (IRGSP)"/>
        </authorList>
    </citation>
    <scope>NUCLEOTIDE SEQUENCE [LARGE SCALE GENOMIC DNA]</scope>
    <source>
        <strain>cv. Nipponbare</strain>
    </source>
</reference>
<reference key="2">
    <citation type="journal article" date="2008" name="Nucleic Acids Res.">
        <title>The rice annotation project database (RAP-DB): 2008 update.</title>
        <authorList>
            <consortium name="The rice annotation project (RAP)"/>
        </authorList>
    </citation>
    <scope>GENOME REANNOTATION</scope>
    <source>
        <strain>cv. Nipponbare</strain>
    </source>
</reference>
<reference key="3">
    <citation type="journal article" date="2013" name="Rice">
        <title>Improvement of the Oryza sativa Nipponbare reference genome using next generation sequence and optical map data.</title>
        <authorList>
            <person name="Kawahara Y."/>
            <person name="de la Bastide M."/>
            <person name="Hamilton J.P."/>
            <person name="Kanamori H."/>
            <person name="McCombie W.R."/>
            <person name="Ouyang S."/>
            <person name="Schwartz D.C."/>
            <person name="Tanaka T."/>
            <person name="Wu J."/>
            <person name="Zhou S."/>
            <person name="Childs K.L."/>
            <person name="Davidson R.M."/>
            <person name="Lin H."/>
            <person name="Quesada-Ocampo L."/>
            <person name="Vaillancourt B."/>
            <person name="Sakai H."/>
            <person name="Lee S.S."/>
            <person name="Kim J."/>
            <person name="Numa H."/>
            <person name="Itoh T."/>
            <person name="Buell C.R."/>
            <person name="Matsumoto T."/>
        </authorList>
    </citation>
    <scope>GENOME REANNOTATION</scope>
    <source>
        <strain>cv. Nipponbare</strain>
    </source>
</reference>
<reference key="4">
    <citation type="journal article" date="2005" name="PLoS Biol.">
        <title>The genomes of Oryza sativa: a history of duplications.</title>
        <authorList>
            <person name="Yu J."/>
            <person name="Wang J."/>
            <person name="Lin W."/>
            <person name="Li S."/>
            <person name="Li H."/>
            <person name="Zhou J."/>
            <person name="Ni P."/>
            <person name="Dong W."/>
            <person name="Hu S."/>
            <person name="Zeng C."/>
            <person name="Zhang J."/>
            <person name="Zhang Y."/>
            <person name="Li R."/>
            <person name="Xu Z."/>
            <person name="Li S."/>
            <person name="Li X."/>
            <person name="Zheng H."/>
            <person name="Cong L."/>
            <person name="Lin L."/>
            <person name="Yin J."/>
            <person name="Geng J."/>
            <person name="Li G."/>
            <person name="Shi J."/>
            <person name="Liu J."/>
            <person name="Lv H."/>
            <person name="Li J."/>
            <person name="Wang J."/>
            <person name="Deng Y."/>
            <person name="Ran L."/>
            <person name="Shi X."/>
            <person name="Wang X."/>
            <person name="Wu Q."/>
            <person name="Li C."/>
            <person name="Ren X."/>
            <person name="Wang J."/>
            <person name="Wang X."/>
            <person name="Li D."/>
            <person name="Liu D."/>
            <person name="Zhang X."/>
            <person name="Ji Z."/>
            <person name="Zhao W."/>
            <person name="Sun Y."/>
            <person name="Zhang Z."/>
            <person name="Bao J."/>
            <person name="Han Y."/>
            <person name="Dong L."/>
            <person name="Ji J."/>
            <person name="Chen P."/>
            <person name="Wu S."/>
            <person name="Liu J."/>
            <person name="Xiao Y."/>
            <person name="Bu D."/>
            <person name="Tan J."/>
            <person name="Yang L."/>
            <person name="Ye C."/>
            <person name="Zhang J."/>
            <person name="Xu J."/>
            <person name="Zhou Y."/>
            <person name="Yu Y."/>
            <person name="Zhang B."/>
            <person name="Zhuang S."/>
            <person name="Wei H."/>
            <person name="Liu B."/>
            <person name="Lei M."/>
            <person name="Yu H."/>
            <person name="Li Y."/>
            <person name="Xu H."/>
            <person name="Wei S."/>
            <person name="He X."/>
            <person name="Fang L."/>
            <person name="Zhang Z."/>
            <person name="Zhang Y."/>
            <person name="Huang X."/>
            <person name="Su Z."/>
            <person name="Tong W."/>
            <person name="Li J."/>
            <person name="Tong Z."/>
            <person name="Li S."/>
            <person name="Ye J."/>
            <person name="Wang L."/>
            <person name="Fang L."/>
            <person name="Lei T."/>
            <person name="Chen C.-S."/>
            <person name="Chen H.-C."/>
            <person name="Xu Z."/>
            <person name="Li H."/>
            <person name="Huang H."/>
            <person name="Zhang F."/>
            <person name="Xu H."/>
            <person name="Li N."/>
            <person name="Zhao C."/>
            <person name="Li S."/>
            <person name="Dong L."/>
            <person name="Huang Y."/>
            <person name="Li L."/>
            <person name="Xi Y."/>
            <person name="Qi Q."/>
            <person name="Li W."/>
            <person name="Zhang B."/>
            <person name="Hu W."/>
            <person name="Zhang Y."/>
            <person name="Tian X."/>
            <person name="Jiao Y."/>
            <person name="Liang X."/>
            <person name="Jin J."/>
            <person name="Gao L."/>
            <person name="Zheng W."/>
            <person name="Hao B."/>
            <person name="Liu S.-M."/>
            <person name="Wang W."/>
            <person name="Yuan L."/>
            <person name="Cao M."/>
            <person name="McDermott J."/>
            <person name="Samudrala R."/>
            <person name="Wang J."/>
            <person name="Wong G.K.-S."/>
            <person name="Yang H."/>
        </authorList>
    </citation>
    <scope>NUCLEOTIDE SEQUENCE [LARGE SCALE GENOMIC DNA]</scope>
    <source>
        <strain>cv. Nipponbare</strain>
    </source>
</reference>
<reference key="5">
    <citation type="journal article" date="2003" name="Science">
        <title>Collection, mapping, and annotation of over 28,000 cDNA clones from japonica rice.</title>
        <authorList>
            <consortium name="The rice full-length cDNA consortium"/>
        </authorList>
    </citation>
    <scope>NUCLEOTIDE SEQUENCE [LARGE SCALE MRNA]</scope>
    <source>
        <strain>cv. Nipponbare</strain>
    </source>
</reference>
<reference key="6">
    <citation type="journal article" date="2009" name="Phytochemistry">
        <title>Analysis of CMP-sialic acid transporter-like proteins in plants.</title>
        <authorList>
            <person name="Takashima S."/>
            <person name="Seino J."/>
            <person name="Nakano T."/>
            <person name="Fujiyama K."/>
            <person name="Tsujimoto M."/>
            <person name="Ishida N."/>
            <person name="Hashimoto Y."/>
        </authorList>
    </citation>
    <scope>FUNCTION</scope>
    <scope>TISSUE SPECIFICITY</scope>
</reference>
<comment type="function">
    <text evidence="1 4">Sugar transporter involved in the transport of CMP-sialic acid from the cytoplasm into the Golgi (By similarity). May transport important nucleotide sugars such as CMP-Kdo (2-keto-3-deoxy-D-manno-octulosonic acid) in physiological conditions (PubMed:19822337).</text>
</comment>
<comment type="subcellular location">
    <subcellularLocation>
        <location evidence="6">Golgi apparatus membrane</location>
        <topology evidence="6">Multi-pass membrane protein</topology>
    </subcellularLocation>
</comment>
<comment type="tissue specificity">
    <text evidence="4">Expressed in roots, leaves and stalks.</text>
</comment>
<comment type="similarity">
    <text evidence="6">Belongs to the nucleotide-sugar transporter family. CMP-Sialate:CMP antiporter (TC 2.A.7.12) subfamily.</text>
</comment>
<keyword id="KW-0333">Golgi apparatus</keyword>
<keyword id="KW-0472">Membrane</keyword>
<keyword id="KW-1185">Reference proteome</keyword>
<keyword id="KW-0762">Sugar transport</keyword>
<keyword id="KW-0812">Transmembrane</keyword>
<keyword id="KW-1133">Transmembrane helix</keyword>
<keyword id="KW-0813">Transport</keyword>
<feature type="chain" id="PRO_0000434339" description="CMP-sialic acid transporter 2">
    <location>
        <begin position="1"/>
        <end position="356"/>
    </location>
</feature>
<feature type="topological domain" description="Cytoplasmic" evidence="6">
    <location>
        <begin position="1"/>
        <end position="52"/>
    </location>
</feature>
<feature type="transmembrane region" description="Helical" evidence="2">
    <location>
        <begin position="53"/>
        <end position="73"/>
    </location>
</feature>
<feature type="topological domain" description="Lumenal" evidence="6">
    <location>
        <begin position="74"/>
        <end position="82"/>
    </location>
</feature>
<feature type="transmembrane region" description="Helical" evidence="2">
    <location>
        <begin position="83"/>
        <end position="103"/>
    </location>
</feature>
<feature type="topological domain" description="Cytoplasmic" evidence="6">
    <location>
        <begin position="104"/>
        <end position="125"/>
    </location>
</feature>
<feature type="transmembrane region" description="Helical" evidence="2">
    <location>
        <begin position="126"/>
        <end position="146"/>
    </location>
</feature>
<feature type="topological domain" description="Lumenal" evidence="6">
    <location>
        <begin position="147"/>
        <end position="149"/>
    </location>
</feature>
<feature type="transmembrane region" description="Helical" evidence="2">
    <location>
        <begin position="150"/>
        <end position="172"/>
    </location>
</feature>
<feature type="topological domain" description="Cytoplasmic" evidence="6">
    <location>
        <begin position="173"/>
        <end position="175"/>
    </location>
</feature>
<feature type="transmembrane region" description="Helical" evidence="2">
    <location>
        <begin position="176"/>
        <end position="196"/>
    </location>
</feature>
<feature type="topological domain" description="Lumenal" evidence="6">
    <location>
        <begin position="197"/>
        <end position="211"/>
    </location>
</feature>
<feature type="transmembrane region" description="Helical" evidence="2">
    <location>
        <begin position="212"/>
        <end position="232"/>
    </location>
</feature>
<feature type="topological domain" description="Cytoplasmic" evidence="6">
    <location>
        <begin position="233"/>
        <end position="239"/>
    </location>
</feature>
<feature type="transmembrane region" description="Helical" evidence="2">
    <location>
        <begin position="240"/>
        <end position="260"/>
    </location>
</feature>
<feature type="topological domain" description="Lumenal" evidence="6">
    <location>
        <begin position="261"/>
        <end position="277"/>
    </location>
</feature>
<feature type="transmembrane region" description="Helical" evidence="2">
    <location>
        <begin position="278"/>
        <end position="298"/>
    </location>
</feature>
<feature type="topological domain" description="Cytoplasmic" evidence="6">
    <location>
        <begin position="299"/>
        <end position="314"/>
    </location>
</feature>
<feature type="transmembrane region" description="Helical" evidence="2">
    <location>
        <begin position="315"/>
        <end position="335"/>
    </location>
</feature>
<feature type="topological domain" description="Lumenal" evidence="6">
    <location>
        <begin position="336"/>
        <end position="356"/>
    </location>
</feature>
<feature type="region of interest" description="Disordered" evidence="3">
    <location>
        <begin position="1"/>
        <end position="44"/>
    </location>
</feature>
<feature type="compositionally biased region" description="Basic and acidic residues" evidence="3">
    <location>
        <begin position="1"/>
        <end position="24"/>
    </location>
</feature>
<feature type="compositionally biased region" description="Low complexity" evidence="3">
    <location>
        <begin position="27"/>
        <end position="44"/>
    </location>
</feature>
<gene>
    <name evidence="5" type="primary">CSTLP2</name>
    <name evidence="8" type="ordered locus">Os07g0573700</name>
    <name evidence="6" type="ordered locus">LOC_Os07g38610</name>
    <name evidence="7" type="ORF">OJ1699_E05.21</name>
    <name evidence="9" type="ORF">OsJ_24829</name>
</gene>
<organism>
    <name type="scientific">Oryza sativa subsp. japonica</name>
    <name type="common">Rice</name>
    <dbReference type="NCBI Taxonomy" id="39947"/>
    <lineage>
        <taxon>Eukaryota</taxon>
        <taxon>Viridiplantae</taxon>
        <taxon>Streptophyta</taxon>
        <taxon>Embryophyta</taxon>
        <taxon>Tracheophyta</taxon>
        <taxon>Spermatophyta</taxon>
        <taxon>Magnoliopsida</taxon>
        <taxon>Liliopsida</taxon>
        <taxon>Poales</taxon>
        <taxon>Poaceae</taxon>
        <taxon>BOP clade</taxon>
        <taxon>Oryzoideae</taxon>
        <taxon>Oryzeae</taxon>
        <taxon>Oryzinae</taxon>
        <taxon>Oryza</taxon>
        <taxon>Oryza sativa</taxon>
    </lineage>
</organism>
<sequence>MEYRRVKDQESYDVVSQKDIESPGERSLSSTSATSSLSTAGASKGKNSWKLKSIVTLALTLLTSSQAILIVWSKRAGKYEYSVTTANFSVEALKCLLSLIALYRTWNSQGVTEDNRLSTSFDEVSVYPIPAILYMVKNLLQYYIFAYVDAPAYQILKNLNIISTGVLYRIILKKKLSEIQWAAFILLCAGCTTAQLNPSSDHVLQTPIQGWVMAIVMALLSGFAGVYTEAIIKKRPSRNINVQNFWLYIFGMLFNLVAICVQDFDAVMNKGFFHGYSFITVLMILNHALSGIAVSMVMKYADNIVKVYSTSVAMLLTAVVSVFLFGFHLSLAFFLGSTVVSVSVYLHSVGKPQPQK</sequence>